<proteinExistence type="inferred from homology"/>
<comment type="function">
    <text evidence="1">Could be involved in septation.</text>
</comment>
<comment type="similarity">
    <text evidence="1">Belongs to the SpoVG family.</text>
</comment>
<gene>
    <name evidence="1" type="primary">spoVG</name>
    <name type="ordered locus">PAM_732</name>
</gene>
<evidence type="ECO:0000255" key="1">
    <source>
        <dbReference type="HAMAP-Rule" id="MF_00819"/>
    </source>
</evidence>
<keyword id="KW-0131">Cell cycle</keyword>
<keyword id="KW-0132">Cell division</keyword>
<keyword id="KW-0717">Septation</keyword>
<feature type="chain" id="PRO_0000157204" description="Putative septation protein SpoVG">
    <location>
        <begin position="1"/>
        <end position="99"/>
    </location>
</feature>
<reference key="1">
    <citation type="journal article" date="2004" name="Nat. Genet.">
        <title>Reductive evolution suggested from the complete genome sequence of a plant-pathogenic phytoplasma.</title>
        <authorList>
            <person name="Oshima K."/>
            <person name="Kakizawa S."/>
            <person name="Nishigawa H."/>
            <person name="Jung H.-Y."/>
            <person name="Wei W."/>
            <person name="Suzuki S."/>
            <person name="Arashida R."/>
            <person name="Nakata D."/>
            <person name="Miyata S."/>
            <person name="Ugaki M."/>
            <person name="Namba S."/>
        </authorList>
    </citation>
    <scope>NUCLEOTIDE SEQUENCE [LARGE SCALE GENOMIC DNA]</scope>
    <source>
        <strain>OY-M</strain>
    </source>
</reference>
<accession>Q6YPJ3</accession>
<organism>
    <name type="scientific">Onion yellows phytoplasma (strain OY-M)</name>
    <dbReference type="NCBI Taxonomy" id="262768"/>
    <lineage>
        <taxon>Bacteria</taxon>
        <taxon>Bacillati</taxon>
        <taxon>Mycoplasmatota</taxon>
        <taxon>Mollicutes</taxon>
        <taxon>Acholeplasmatales</taxon>
        <taxon>Acholeplasmataceae</taxon>
        <taxon>Candidatus Phytoplasma</taxon>
        <taxon>16SrI (Aster yellows group)</taxon>
    </lineage>
</organism>
<dbReference type="EMBL" id="AP006628">
    <property type="protein sequence ID" value="BAD04817.1"/>
    <property type="molecule type" value="Genomic_DNA"/>
</dbReference>
<dbReference type="SMR" id="Q6YPJ3"/>
<dbReference type="STRING" id="262768.PAM_732"/>
<dbReference type="KEGG" id="poy:PAM_732"/>
<dbReference type="eggNOG" id="COG2088">
    <property type="taxonomic scope" value="Bacteria"/>
</dbReference>
<dbReference type="HOGENOM" id="CLU_103669_2_1_14"/>
<dbReference type="BioCyc" id="OYEL262768:G1G26-887-MONOMER"/>
<dbReference type="Proteomes" id="UP000002523">
    <property type="component" value="Chromosome"/>
</dbReference>
<dbReference type="GO" id="GO:0000917">
    <property type="term" value="P:division septum assembly"/>
    <property type="evidence" value="ECO:0007669"/>
    <property type="project" value="UniProtKB-KW"/>
</dbReference>
<dbReference type="GO" id="GO:0030435">
    <property type="term" value="P:sporulation resulting in formation of a cellular spore"/>
    <property type="evidence" value="ECO:0007669"/>
    <property type="project" value="InterPro"/>
</dbReference>
<dbReference type="Gene3D" id="3.30.1120.40">
    <property type="entry name" value="Stage V sporulation protein G"/>
    <property type="match status" value="1"/>
</dbReference>
<dbReference type="HAMAP" id="MF_00819">
    <property type="entry name" value="SpoVG"/>
    <property type="match status" value="1"/>
</dbReference>
<dbReference type="InterPro" id="IPR007170">
    <property type="entry name" value="SpoVG"/>
</dbReference>
<dbReference type="InterPro" id="IPR036751">
    <property type="entry name" value="SpoVG_sf"/>
</dbReference>
<dbReference type="NCBIfam" id="NF009749">
    <property type="entry name" value="PRK13259.1"/>
    <property type="match status" value="1"/>
</dbReference>
<dbReference type="PANTHER" id="PTHR38429">
    <property type="entry name" value="SEPTATION PROTEIN SPOVG-RELATED"/>
    <property type="match status" value="1"/>
</dbReference>
<dbReference type="PANTHER" id="PTHR38429:SF1">
    <property type="entry name" value="SEPTATION PROTEIN SPOVG-RELATED"/>
    <property type="match status" value="1"/>
</dbReference>
<dbReference type="Pfam" id="PF04026">
    <property type="entry name" value="SpoVG"/>
    <property type="match status" value="1"/>
</dbReference>
<dbReference type="SUPFAM" id="SSF160537">
    <property type="entry name" value="SpoVG-like"/>
    <property type="match status" value="1"/>
</dbReference>
<sequence length="99" mass="11411">MKVTDVKIRKINGESRLRGVSSITFENQFVVNDIRIIEGERGIFIAMPSRKTSKGNFRDIAHPINSETRQLIENCIKTKYQDLLDNPPQEEDFSQNSEN</sequence>
<protein>
    <recommendedName>
        <fullName evidence="1">Putative septation protein SpoVG</fullName>
    </recommendedName>
</protein>
<name>SP5G_ONYPE</name>